<comment type="function">
    <text evidence="1">Catalyzes the conversion of uracil and 5-phospho-alpha-D-ribose 1-diphosphate (PRPP) to UMP and diphosphate.</text>
</comment>
<comment type="catalytic activity">
    <reaction evidence="1">
        <text>UMP + diphosphate = 5-phospho-alpha-D-ribose 1-diphosphate + uracil</text>
        <dbReference type="Rhea" id="RHEA:13017"/>
        <dbReference type="ChEBI" id="CHEBI:17568"/>
        <dbReference type="ChEBI" id="CHEBI:33019"/>
        <dbReference type="ChEBI" id="CHEBI:57865"/>
        <dbReference type="ChEBI" id="CHEBI:58017"/>
        <dbReference type="EC" id="2.4.2.9"/>
    </reaction>
</comment>
<comment type="cofactor">
    <cofactor evidence="1">
        <name>Mg(2+)</name>
        <dbReference type="ChEBI" id="CHEBI:18420"/>
    </cofactor>
    <text evidence="1">Binds 1 Mg(2+) ion per subunit. The magnesium is bound as Mg-PRPP.</text>
</comment>
<comment type="activity regulation">
    <text evidence="1">Allosterically activated by GTP.</text>
</comment>
<comment type="pathway">
    <text evidence="1">Pyrimidine metabolism; UMP biosynthesis via salvage pathway; UMP from uracil: step 1/1.</text>
</comment>
<comment type="similarity">
    <text evidence="1">Belongs to the UPRTase family.</text>
</comment>
<sequence>MNVNVINHPLVRHKLTLMREADCSTYKFRTLAIELARLMAYEASRDFEIEKYLIDGWCGQIEGDRIKGKTLTVVPILRAGLGMLDGVLDLIPTAKISVVGLQRDEETLKPVSYFEKFVDSMDERPALIIDPMLATGGSMVATIDLLKAKGCKNIKALVLVAAPEGVKAVNDAHPDVTIYTAALDSHLNENGYIIPGLGDAGDKIFGTR</sequence>
<name>UPP_NEIM0</name>
<keyword id="KW-0021">Allosteric enzyme</keyword>
<keyword id="KW-0328">Glycosyltransferase</keyword>
<keyword id="KW-0342">GTP-binding</keyword>
<keyword id="KW-0460">Magnesium</keyword>
<keyword id="KW-0547">Nucleotide-binding</keyword>
<keyword id="KW-0808">Transferase</keyword>
<protein>
    <recommendedName>
        <fullName evidence="1">Uracil phosphoribosyltransferase</fullName>
        <ecNumber evidence="1">2.4.2.9</ecNumber>
    </recommendedName>
    <alternativeName>
        <fullName evidence="1">UMP pyrophosphorylase</fullName>
    </alternativeName>
    <alternativeName>
        <fullName evidence="1">UPRTase</fullName>
    </alternativeName>
</protein>
<organism>
    <name type="scientific">Neisseria meningitidis serogroup C (strain 053442)</name>
    <dbReference type="NCBI Taxonomy" id="374833"/>
    <lineage>
        <taxon>Bacteria</taxon>
        <taxon>Pseudomonadati</taxon>
        <taxon>Pseudomonadota</taxon>
        <taxon>Betaproteobacteria</taxon>
        <taxon>Neisseriales</taxon>
        <taxon>Neisseriaceae</taxon>
        <taxon>Neisseria</taxon>
    </lineage>
</organism>
<reference key="1">
    <citation type="journal article" date="2008" name="Genomics">
        <title>Characterization of ST-4821 complex, a unique Neisseria meningitidis clone.</title>
        <authorList>
            <person name="Peng J."/>
            <person name="Yang L."/>
            <person name="Yang F."/>
            <person name="Yang J."/>
            <person name="Yan Y."/>
            <person name="Nie H."/>
            <person name="Zhang X."/>
            <person name="Xiong Z."/>
            <person name="Jiang Y."/>
            <person name="Cheng F."/>
            <person name="Xu X."/>
            <person name="Chen S."/>
            <person name="Sun L."/>
            <person name="Li W."/>
            <person name="Shen Y."/>
            <person name="Shao Z."/>
            <person name="Liang X."/>
            <person name="Xu J."/>
            <person name="Jin Q."/>
        </authorList>
    </citation>
    <scope>NUCLEOTIDE SEQUENCE [LARGE SCALE GENOMIC DNA]</scope>
    <source>
        <strain>053442</strain>
    </source>
</reference>
<gene>
    <name evidence="1" type="primary">upp</name>
    <name type="ordered locus">NMCC_0738</name>
</gene>
<proteinExistence type="inferred from homology"/>
<accession>A9M3K6</accession>
<evidence type="ECO:0000255" key="1">
    <source>
        <dbReference type="HAMAP-Rule" id="MF_01218"/>
    </source>
</evidence>
<dbReference type="EC" id="2.4.2.9" evidence="1"/>
<dbReference type="EMBL" id="CP000381">
    <property type="protein sequence ID" value="ABX72931.1"/>
    <property type="molecule type" value="Genomic_DNA"/>
</dbReference>
<dbReference type="RefSeq" id="WP_002214002.1">
    <property type="nucleotide sequence ID" value="NC_010120.1"/>
</dbReference>
<dbReference type="SMR" id="A9M3K6"/>
<dbReference type="GeneID" id="93386397"/>
<dbReference type="KEGG" id="nmn:NMCC_0738"/>
<dbReference type="HOGENOM" id="CLU_067096_2_2_4"/>
<dbReference type="UniPathway" id="UPA00574">
    <property type="reaction ID" value="UER00636"/>
</dbReference>
<dbReference type="Proteomes" id="UP000001177">
    <property type="component" value="Chromosome"/>
</dbReference>
<dbReference type="GO" id="GO:0005525">
    <property type="term" value="F:GTP binding"/>
    <property type="evidence" value="ECO:0007669"/>
    <property type="project" value="UniProtKB-KW"/>
</dbReference>
<dbReference type="GO" id="GO:0000287">
    <property type="term" value="F:magnesium ion binding"/>
    <property type="evidence" value="ECO:0007669"/>
    <property type="project" value="UniProtKB-UniRule"/>
</dbReference>
<dbReference type="GO" id="GO:0004845">
    <property type="term" value="F:uracil phosphoribosyltransferase activity"/>
    <property type="evidence" value="ECO:0007669"/>
    <property type="project" value="UniProtKB-UniRule"/>
</dbReference>
<dbReference type="GO" id="GO:0044206">
    <property type="term" value="P:UMP salvage"/>
    <property type="evidence" value="ECO:0007669"/>
    <property type="project" value="UniProtKB-UniRule"/>
</dbReference>
<dbReference type="GO" id="GO:0006223">
    <property type="term" value="P:uracil salvage"/>
    <property type="evidence" value="ECO:0007669"/>
    <property type="project" value="InterPro"/>
</dbReference>
<dbReference type="CDD" id="cd06223">
    <property type="entry name" value="PRTases_typeI"/>
    <property type="match status" value="1"/>
</dbReference>
<dbReference type="FunFam" id="3.40.50.2020:FF:000003">
    <property type="entry name" value="Uracil phosphoribosyltransferase"/>
    <property type="match status" value="1"/>
</dbReference>
<dbReference type="Gene3D" id="3.40.50.2020">
    <property type="match status" value="1"/>
</dbReference>
<dbReference type="HAMAP" id="MF_01218_B">
    <property type="entry name" value="Upp_B"/>
    <property type="match status" value="1"/>
</dbReference>
<dbReference type="InterPro" id="IPR000836">
    <property type="entry name" value="PRibTrfase_dom"/>
</dbReference>
<dbReference type="InterPro" id="IPR029057">
    <property type="entry name" value="PRTase-like"/>
</dbReference>
<dbReference type="InterPro" id="IPR034332">
    <property type="entry name" value="Upp_B"/>
</dbReference>
<dbReference type="InterPro" id="IPR050054">
    <property type="entry name" value="UPRTase/APRTase"/>
</dbReference>
<dbReference type="InterPro" id="IPR005765">
    <property type="entry name" value="Ura_phspho_trans"/>
</dbReference>
<dbReference type="NCBIfam" id="NF001097">
    <property type="entry name" value="PRK00129.1"/>
    <property type="match status" value="1"/>
</dbReference>
<dbReference type="NCBIfam" id="TIGR01091">
    <property type="entry name" value="upp"/>
    <property type="match status" value="1"/>
</dbReference>
<dbReference type="PANTHER" id="PTHR32315">
    <property type="entry name" value="ADENINE PHOSPHORIBOSYLTRANSFERASE"/>
    <property type="match status" value="1"/>
</dbReference>
<dbReference type="PANTHER" id="PTHR32315:SF4">
    <property type="entry name" value="URACIL PHOSPHORIBOSYLTRANSFERASE, CHLOROPLASTIC"/>
    <property type="match status" value="1"/>
</dbReference>
<dbReference type="Pfam" id="PF14681">
    <property type="entry name" value="UPRTase"/>
    <property type="match status" value="1"/>
</dbReference>
<dbReference type="SUPFAM" id="SSF53271">
    <property type="entry name" value="PRTase-like"/>
    <property type="match status" value="1"/>
</dbReference>
<feature type="chain" id="PRO_1000085630" description="Uracil phosphoribosyltransferase">
    <location>
        <begin position="1"/>
        <end position="208"/>
    </location>
</feature>
<feature type="binding site" evidence="1">
    <location>
        <position position="78"/>
    </location>
    <ligand>
        <name>5-phospho-alpha-D-ribose 1-diphosphate</name>
        <dbReference type="ChEBI" id="CHEBI:58017"/>
    </ligand>
</feature>
<feature type="binding site" evidence="1">
    <location>
        <position position="103"/>
    </location>
    <ligand>
        <name>5-phospho-alpha-D-ribose 1-diphosphate</name>
        <dbReference type="ChEBI" id="CHEBI:58017"/>
    </ligand>
</feature>
<feature type="binding site" evidence="1">
    <location>
        <begin position="130"/>
        <end position="138"/>
    </location>
    <ligand>
        <name>5-phospho-alpha-D-ribose 1-diphosphate</name>
        <dbReference type="ChEBI" id="CHEBI:58017"/>
    </ligand>
</feature>
<feature type="binding site" evidence="1">
    <location>
        <position position="193"/>
    </location>
    <ligand>
        <name>uracil</name>
        <dbReference type="ChEBI" id="CHEBI:17568"/>
    </ligand>
</feature>
<feature type="binding site" evidence="1">
    <location>
        <begin position="198"/>
        <end position="200"/>
    </location>
    <ligand>
        <name>uracil</name>
        <dbReference type="ChEBI" id="CHEBI:17568"/>
    </ligand>
</feature>
<feature type="binding site" evidence="1">
    <location>
        <position position="199"/>
    </location>
    <ligand>
        <name>5-phospho-alpha-D-ribose 1-diphosphate</name>
        <dbReference type="ChEBI" id="CHEBI:58017"/>
    </ligand>
</feature>